<dbReference type="EMBL" id="AB044090">
    <property type="protein sequence ID" value="BAB21503.1"/>
    <property type="molecule type" value="mRNA"/>
</dbReference>
<dbReference type="CCDS" id="CCDS20697.1"/>
<dbReference type="PIR" id="JC7584">
    <property type="entry name" value="JC7584"/>
</dbReference>
<dbReference type="RefSeq" id="NP_001258697.1">
    <property type="nucleotide sequence ID" value="NM_001271768.1"/>
</dbReference>
<dbReference type="RefSeq" id="NP_077789.1">
    <property type="nucleotide sequence ID" value="NM_024469.2"/>
</dbReference>
<dbReference type="SMR" id="Q99PV5"/>
<dbReference type="BioGRID" id="219755">
    <property type="interactions" value="3"/>
</dbReference>
<dbReference type="DIP" id="DIP-57696N"/>
<dbReference type="FunCoup" id="Q99PV5">
    <property type="interactions" value="875"/>
</dbReference>
<dbReference type="IntAct" id="Q99PV5">
    <property type="interactions" value="25"/>
</dbReference>
<dbReference type="MINT" id="Q99PV5"/>
<dbReference type="STRING" id="10090.ENSMUSP00000032386"/>
<dbReference type="iPTMnet" id="Q99PV5"/>
<dbReference type="PhosphoSitePlus" id="Q99PV5"/>
<dbReference type="PaxDb" id="10090-ENSMUSP00000032386"/>
<dbReference type="ProteomicsDB" id="273682"/>
<dbReference type="Antibodypedia" id="24289">
    <property type="antibodies" value="459 antibodies from 32 providers"/>
</dbReference>
<dbReference type="DNASU" id="79362"/>
<dbReference type="Ensembl" id="ENSMUST00000032386.11">
    <property type="protein sequence ID" value="ENSMUSP00000032386.5"/>
    <property type="gene ID" value="ENSMUSG00000030256.12"/>
</dbReference>
<dbReference type="GeneID" id="79362"/>
<dbReference type="KEGG" id="mmu:79362"/>
<dbReference type="UCSC" id="uc009ert.2">
    <property type="organism name" value="mouse"/>
</dbReference>
<dbReference type="AGR" id="MGI:1930704"/>
<dbReference type="CTD" id="79365"/>
<dbReference type="MGI" id="MGI:1930704">
    <property type="gene designation" value="Bhlhe41"/>
</dbReference>
<dbReference type="VEuPathDB" id="HostDB:ENSMUSG00000030256"/>
<dbReference type="eggNOG" id="KOG4304">
    <property type="taxonomic scope" value="Eukaryota"/>
</dbReference>
<dbReference type="GeneTree" id="ENSGT00940000161014"/>
<dbReference type="HOGENOM" id="CLU_049895_0_0_1"/>
<dbReference type="InParanoid" id="Q99PV5"/>
<dbReference type="OMA" id="MDEGIPR"/>
<dbReference type="OrthoDB" id="690068at2759"/>
<dbReference type="PhylomeDB" id="Q99PV5"/>
<dbReference type="TreeFam" id="TF330859"/>
<dbReference type="BioGRID-ORCS" id="79362">
    <property type="hits" value="2 hits in 79 CRISPR screens"/>
</dbReference>
<dbReference type="ChiTaRS" id="Bhlhe41">
    <property type="organism name" value="mouse"/>
</dbReference>
<dbReference type="PRO" id="PR:Q99PV5"/>
<dbReference type="Proteomes" id="UP000000589">
    <property type="component" value="Chromosome 6"/>
</dbReference>
<dbReference type="RNAct" id="Q99PV5">
    <property type="molecule type" value="protein"/>
</dbReference>
<dbReference type="Bgee" id="ENSMUSG00000030256">
    <property type="expression patterns" value="Expressed in retinal neural layer and 111 other cell types or tissues"/>
</dbReference>
<dbReference type="ExpressionAtlas" id="Q99PV5">
    <property type="expression patterns" value="baseline and differential"/>
</dbReference>
<dbReference type="GO" id="GO:0005654">
    <property type="term" value="C:nucleoplasm"/>
    <property type="evidence" value="ECO:0000304"/>
    <property type="project" value="Reactome"/>
</dbReference>
<dbReference type="GO" id="GO:0017053">
    <property type="term" value="C:transcription repressor complex"/>
    <property type="evidence" value="ECO:0000304"/>
    <property type="project" value="MGI"/>
</dbReference>
<dbReference type="GO" id="GO:0043425">
    <property type="term" value="F:bHLH transcription factor binding"/>
    <property type="evidence" value="ECO:0000314"/>
    <property type="project" value="BHF-UCL"/>
</dbReference>
<dbReference type="GO" id="GO:0000981">
    <property type="term" value="F:DNA-binding transcription factor activity, RNA polymerase II-specific"/>
    <property type="evidence" value="ECO:0000314"/>
    <property type="project" value="BHF-UCL"/>
</dbReference>
<dbReference type="GO" id="GO:0001227">
    <property type="term" value="F:DNA-binding transcription repressor activity, RNA polymerase II-specific"/>
    <property type="evidence" value="ECO:0000314"/>
    <property type="project" value="BHF-UCL"/>
</dbReference>
<dbReference type="GO" id="GO:0070888">
    <property type="term" value="F:E-box binding"/>
    <property type="evidence" value="ECO:0000314"/>
    <property type="project" value="BHF-UCL"/>
</dbReference>
<dbReference type="GO" id="GO:0042826">
    <property type="term" value="F:histone deacetylase binding"/>
    <property type="evidence" value="ECO:0000314"/>
    <property type="project" value="BHF-UCL"/>
</dbReference>
<dbReference type="GO" id="GO:0043426">
    <property type="term" value="F:MRF binding"/>
    <property type="evidence" value="ECO:0000314"/>
    <property type="project" value="BHF-UCL"/>
</dbReference>
<dbReference type="GO" id="GO:0046982">
    <property type="term" value="F:protein heterodimerization activity"/>
    <property type="evidence" value="ECO:0000353"/>
    <property type="project" value="BHF-UCL"/>
</dbReference>
<dbReference type="GO" id="GO:0042803">
    <property type="term" value="F:protein homodimerization activity"/>
    <property type="evidence" value="ECO:0000353"/>
    <property type="project" value="BHF-UCL"/>
</dbReference>
<dbReference type="GO" id="GO:0000978">
    <property type="term" value="F:RNA polymerase II cis-regulatory region sequence-specific DNA binding"/>
    <property type="evidence" value="ECO:0000314"/>
    <property type="project" value="BHF-UCL"/>
</dbReference>
<dbReference type="GO" id="GO:0061629">
    <property type="term" value="F:RNA polymerase II-specific DNA-binding transcription factor binding"/>
    <property type="evidence" value="ECO:0000314"/>
    <property type="project" value="BHF-UCL"/>
</dbReference>
<dbReference type="GO" id="GO:0003714">
    <property type="term" value="F:transcription corepressor activity"/>
    <property type="evidence" value="ECO:0000304"/>
    <property type="project" value="MGI"/>
</dbReference>
<dbReference type="GO" id="GO:0032922">
    <property type="term" value="P:circadian regulation of gene expression"/>
    <property type="evidence" value="ECO:0000315"/>
    <property type="project" value="BHF-UCL"/>
</dbReference>
<dbReference type="GO" id="GO:0007623">
    <property type="term" value="P:circadian rhythm"/>
    <property type="evidence" value="ECO:0000270"/>
    <property type="project" value="UniProtKB"/>
</dbReference>
<dbReference type="GO" id="GO:0045892">
    <property type="term" value="P:negative regulation of DNA-templated transcription"/>
    <property type="evidence" value="ECO:0000314"/>
    <property type="project" value="UniProtKB"/>
</dbReference>
<dbReference type="GO" id="GO:0010832">
    <property type="term" value="P:negative regulation of myotube differentiation"/>
    <property type="evidence" value="ECO:0000314"/>
    <property type="project" value="BHF-UCL"/>
</dbReference>
<dbReference type="GO" id="GO:0010944">
    <property type="term" value="P:negative regulation of transcription by competitive promoter binding"/>
    <property type="evidence" value="ECO:0000314"/>
    <property type="project" value="BHF-UCL"/>
</dbReference>
<dbReference type="GO" id="GO:0000122">
    <property type="term" value="P:negative regulation of transcription by RNA polymerase II"/>
    <property type="evidence" value="ECO:0000314"/>
    <property type="project" value="BHF-UCL"/>
</dbReference>
<dbReference type="CDD" id="cd19750">
    <property type="entry name" value="bHLH-O_DEC2"/>
    <property type="match status" value="1"/>
</dbReference>
<dbReference type="FunFam" id="4.10.280.10:FF:000020">
    <property type="entry name" value="class E basic helix-loop-helix protein 40"/>
    <property type="match status" value="1"/>
</dbReference>
<dbReference type="Gene3D" id="6.10.250.980">
    <property type="match status" value="1"/>
</dbReference>
<dbReference type="Gene3D" id="4.10.280.10">
    <property type="entry name" value="Helix-loop-helix DNA-binding domain"/>
    <property type="match status" value="1"/>
</dbReference>
<dbReference type="InterPro" id="IPR011598">
    <property type="entry name" value="bHLH_dom"/>
</dbReference>
<dbReference type="InterPro" id="IPR050370">
    <property type="entry name" value="HES_HEY"/>
</dbReference>
<dbReference type="InterPro" id="IPR036638">
    <property type="entry name" value="HLH_DNA-bd_sf"/>
</dbReference>
<dbReference type="InterPro" id="IPR003650">
    <property type="entry name" value="Orange_dom"/>
</dbReference>
<dbReference type="PANTHER" id="PTHR10985">
    <property type="entry name" value="BASIC HELIX-LOOP-HELIX TRANSCRIPTION FACTOR, HES-RELATED"/>
    <property type="match status" value="1"/>
</dbReference>
<dbReference type="Pfam" id="PF07527">
    <property type="entry name" value="Hairy_orange"/>
    <property type="match status" value="1"/>
</dbReference>
<dbReference type="Pfam" id="PF00010">
    <property type="entry name" value="HLH"/>
    <property type="match status" value="1"/>
</dbReference>
<dbReference type="SMART" id="SM00353">
    <property type="entry name" value="HLH"/>
    <property type="match status" value="1"/>
</dbReference>
<dbReference type="SMART" id="SM00511">
    <property type="entry name" value="ORANGE"/>
    <property type="match status" value="1"/>
</dbReference>
<dbReference type="SUPFAM" id="SSF47459">
    <property type="entry name" value="HLH, helix-loop-helix DNA-binding domain"/>
    <property type="match status" value="1"/>
</dbReference>
<dbReference type="SUPFAM" id="SSF158457">
    <property type="entry name" value="Orange domain-like"/>
    <property type="match status" value="1"/>
</dbReference>
<dbReference type="PROSITE" id="PS50888">
    <property type="entry name" value="BHLH"/>
    <property type="match status" value="1"/>
</dbReference>
<dbReference type="PROSITE" id="PS51054">
    <property type="entry name" value="ORANGE"/>
    <property type="match status" value="1"/>
</dbReference>
<protein>
    <recommendedName>
        <fullName>Class E basic helix-loop-helix protein 41</fullName>
        <shortName>bHLHe41</shortName>
    </recommendedName>
    <alternativeName>
        <fullName>Class B basic helix-loop-helix protein 3</fullName>
        <shortName>bHLHb3</shortName>
    </alternativeName>
    <alternativeName>
        <fullName>Differentially expressed in chondrocytes protein 2</fullName>
        <shortName>mDEC2</shortName>
    </alternativeName>
</protein>
<reference key="1">
    <citation type="journal article" date="2001" name="Biochem. Biophys. Res. Commun.">
        <title>Molecular cloning and characterization of DEC2, a new member of basic helix-loop-helix proteins.</title>
        <authorList>
            <person name="Fujimoto K."/>
            <person name="Shen M."/>
            <person name="Noshiro M."/>
            <person name="Matsubara K."/>
            <person name="Shingu S."/>
            <person name="Honda K."/>
            <person name="Yoshida E."/>
            <person name="Suardita K."/>
            <person name="Matsuda Y."/>
            <person name="Kato Y."/>
        </authorList>
    </citation>
    <scope>NUCLEOTIDE SEQUENCE [MRNA]</scope>
</reference>
<reference key="2">
    <citation type="journal article" date="2002" name="Nature">
        <title>Dec1 and Dec2 are regulators of the mammalian molecular clock.</title>
        <authorList>
            <person name="Honma S."/>
            <person name="Kawamoto T."/>
            <person name="Takagi Y."/>
            <person name="Fujimoto K."/>
            <person name="Sato F."/>
            <person name="Noshiro M."/>
            <person name="Kato Y."/>
            <person name="Honma K.I."/>
        </authorList>
    </citation>
    <scope>FUNCTION</scope>
    <scope>INTERACTION WITH BMAL1</scope>
</reference>
<reference key="3">
    <citation type="journal article" date="2004" name="Biochem. Biophys. Res. Commun.">
        <title>A novel autofeedback loop of Dec1 transcription involved in circadian rhythm regulation.</title>
        <authorList>
            <person name="Kawamoto T."/>
            <person name="Noshiro M."/>
            <person name="Sato F."/>
            <person name="Maemura K."/>
            <person name="Takeda N."/>
            <person name="Nagai R."/>
            <person name="Iwata T."/>
            <person name="Fujimoto K."/>
            <person name="Furukawa M."/>
            <person name="Miyazaki K."/>
            <person name="Honma S."/>
            <person name="Honma K.I."/>
            <person name="Kato Y."/>
        </authorList>
    </citation>
    <scope>FUNCTION</scope>
</reference>
<reference key="4">
    <citation type="journal article" date="2004" name="Eur. J. Biochem.">
        <title>Functional analysis of the basic helix-loop-helix transcription factor DEC1 in circadian regulation. Interaction with BMAL1.</title>
        <authorList>
            <person name="Sato F."/>
            <person name="Kawamoto T."/>
            <person name="Fujimoto K."/>
            <person name="Noshiro M."/>
            <person name="Honda K.K."/>
            <person name="Honma S."/>
            <person name="Honma K."/>
            <person name="Kato Y."/>
        </authorList>
    </citation>
    <scope>SUBUNIT</scope>
    <scope>HETERODIMERIZATION WITH BHLHE40</scope>
</reference>
<reference key="5">
    <citation type="journal article" date="2008" name="Mol. Cell. Biol.">
        <title>DEC1 modulates the circadian phase of clock gene expression.</title>
        <authorList>
            <person name="Nakashima A."/>
            <person name="Kawamoto T."/>
            <person name="Honda K.K."/>
            <person name="Ueshima T."/>
            <person name="Noshiro M."/>
            <person name="Iwata T."/>
            <person name="Fujimoto K."/>
            <person name="Kubo H."/>
            <person name="Honma S."/>
            <person name="Yorioka N."/>
            <person name="Kohno N."/>
            <person name="Kato Y."/>
        </authorList>
    </citation>
    <scope>FUNCTION</scope>
</reference>
<reference key="6">
    <citation type="journal article" date="2009" name="Mol. Pharmacol.">
        <title>The basic helix-loop-helix proteins differentiated embryo chondrocyte (DEC) 1 and DEC2 function as corepressors of retinoid X receptors.</title>
        <authorList>
            <person name="Cho Y."/>
            <person name="Noshiro M."/>
            <person name="Choi M."/>
            <person name="Morita K."/>
            <person name="Kawamoto T."/>
            <person name="Fujimoto K."/>
            <person name="Kato Y."/>
            <person name="Makishima M."/>
        </authorList>
    </citation>
    <scope>FUNCTION</scope>
    <scope>INDUCTION</scope>
</reference>
<reference key="7">
    <citation type="journal article" date="2009" name="Science">
        <title>The transcriptional repressor DEC2 regulates sleep length in mammals.</title>
        <authorList>
            <person name="He Y."/>
            <person name="Jones C.R."/>
            <person name="Fujiki N."/>
            <person name="Xu Y."/>
            <person name="Guo B."/>
            <person name="Holder J.L. Jr."/>
            <person name="Rossner M.J."/>
            <person name="Nishino S."/>
            <person name="Fu Y.H."/>
        </authorList>
    </citation>
    <scope>TRANSGENIC MICE</scope>
</reference>
<reference key="8">
    <citation type="journal article" date="2014" name="PLoS Biol.">
        <title>A novel protein, CHRONO, functions as a core component of the mammalian circadian clock.</title>
        <authorList>
            <person name="Goriki A."/>
            <person name="Hatanaka F."/>
            <person name="Myung J."/>
            <person name="Kim J.K."/>
            <person name="Yoritaka T."/>
            <person name="Tanoue S."/>
            <person name="Abe T."/>
            <person name="Kiyonari H."/>
            <person name="Fujimoto K."/>
            <person name="Kato Y."/>
            <person name="Todo T."/>
            <person name="Matsubara A."/>
            <person name="Forger D."/>
            <person name="Takumi T."/>
        </authorList>
    </citation>
    <scope>FUNCTION</scope>
    <scope>INTERACTION WITH CIART</scope>
</reference>
<reference key="9">
    <citation type="journal article" date="2018" name="Theranostics">
        <title>Small heterodimer partner regulates circadian cytochromes p450 and drug-induced hepatotoxicity.</title>
        <authorList>
            <person name="Zhang T."/>
            <person name="Yu F."/>
            <person name="Guo L."/>
            <person name="Chen M."/>
            <person name="Yuan X."/>
            <person name="Wu B."/>
        </authorList>
    </citation>
    <scope>FUNCTION</scope>
    <scope>INTERACTION WITH NR0B2 AND HNF1A</scope>
</reference>
<keyword id="KW-0090">Biological rhythms</keyword>
<keyword id="KW-0238">DNA-binding</keyword>
<keyword id="KW-1017">Isopeptide bond</keyword>
<keyword id="KW-0539">Nucleus</keyword>
<keyword id="KW-1185">Reference proteome</keyword>
<keyword id="KW-0678">Repressor</keyword>
<keyword id="KW-0804">Transcription</keyword>
<keyword id="KW-0805">Transcription regulation</keyword>
<keyword id="KW-0832">Ubl conjugation</keyword>
<evidence type="ECO:0000250" key="1">
    <source>
        <dbReference type="UniProtKB" id="Q9C0J9"/>
    </source>
</evidence>
<evidence type="ECO:0000255" key="2">
    <source>
        <dbReference type="PROSITE-ProRule" id="PRU00380"/>
    </source>
</evidence>
<evidence type="ECO:0000255" key="3">
    <source>
        <dbReference type="PROSITE-ProRule" id="PRU00981"/>
    </source>
</evidence>
<evidence type="ECO:0000256" key="4">
    <source>
        <dbReference type="SAM" id="MobiDB-lite"/>
    </source>
</evidence>
<evidence type="ECO:0000269" key="5">
    <source>
    </source>
</evidence>
<evidence type="ECO:0000269" key="6">
    <source>
    </source>
</evidence>
<evidence type="ECO:0000269" key="7">
    <source>
    </source>
</evidence>
<evidence type="ECO:0000269" key="8">
    <source>
    </source>
</evidence>
<evidence type="ECO:0000269" key="9">
    <source>
    </source>
</evidence>
<evidence type="ECO:0000269" key="10">
    <source>
    </source>
</evidence>
<evidence type="ECO:0000269" key="11">
    <source>
    </source>
</evidence>
<sequence length="410" mass="43946">MDEGIPHLQERQLLEHRDFIGLDYSSLYMCKPKRSLKRDDTKDTYKLPHRLIEKKRRDRINECIAQLKDLLPEHLKLTTLGHLEKAVVLELTLKHLKALTALTEQQHQKIIALQNGERSLKSPVQADLDAFHSGFQTCAKEVLQYLARFESWTPREPRCAQLVSHLHAVATQLLTPQVPSGRGSGRAPCSAGAAAASGPERVARCVPVIQRTQPGTEPEHDTDTDSGYGGEAEQGRAAVKQEPPGDSSPAPKRPKLEARGALLGPEPALLGSLVALGGGAPFAQPAAAPFCLPFYLLSPSAAAYVQPWLDKSGLDKYLYPAAAAPFPLLYPGIPAAAAAAAAAAFPCLSSVLSPPPEKAGATAGAPFLAHEVAPPGPLRPQHAHSRTHLPRAVNPESSQEDATQPAKDAP</sequence>
<name>BHE41_MOUSE</name>
<accession>Q99PV5</accession>
<organism>
    <name type="scientific">Mus musculus</name>
    <name type="common">Mouse</name>
    <dbReference type="NCBI Taxonomy" id="10090"/>
    <lineage>
        <taxon>Eukaryota</taxon>
        <taxon>Metazoa</taxon>
        <taxon>Chordata</taxon>
        <taxon>Craniata</taxon>
        <taxon>Vertebrata</taxon>
        <taxon>Euteleostomi</taxon>
        <taxon>Mammalia</taxon>
        <taxon>Eutheria</taxon>
        <taxon>Euarchontoglires</taxon>
        <taxon>Glires</taxon>
        <taxon>Rodentia</taxon>
        <taxon>Myomorpha</taxon>
        <taxon>Muroidea</taxon>
        <taxon>Muridae</taxon>
        <taxon>Murinae</taxon>
        <taxon>Mus</taxon>
        <taxon>Mus</taxon>
    </lineage>
</organism>
<gene>
    <name type="primary">Bhlhe41</name>
    <name type="synonym">Bhlhb3</name>
    <name type="synonym">Dec2</name>
</gene>
<proteinExistence type="evidence at protein level"/>
<feature type="chain" id="PRO_0000127148" description="Class E basic helix-loop-helix protein 41">
    <location>
        <begin position="1"/>
        <end position="410"/>
    </location>
</feature>
<feature type="domain" description="bHLH" evidence="3">
    <location>
        <begin position="44"/>
        <end position="99"/>
    </location>
</feature>
<feature type="domain" description="Orange" evidence="2">
    <location>
        <begin position="131"/>
        <end position="166"/>
    </location>
</feature>
<feature type="region of interest" description="Disordered" evidence="4">
    <location>
        <begin position="209"/>
        <end position="255"/>
    </location>
</feature>
<feature type="region of interest" description="Disordered" evidence="4">
    <location>
        <begin position="360"/>
        <end position="410"/>
    </location>
</feature>
<feature type="cross-link" description="Glycyl lysine isopeptide (Lys-Gly) (interchain with G-Cter in SUMO2)" evidence="1">
    <location>
        <position position="31"/>
    </location>
</feature>
<feature type="cross-link" description="Glycyl lysine isopeptide (Lys-Gly) (interchain with G-Cter in SUMO2)" evidence="1">
    <location>
        <position position="121"/>
    </location>
</feature>
<feature type="cross-link" description="Glycyl lysine isopeptide (Lys-Gly) (interchain with G-Cter in SUMO2)" evidence="1">
    <location>
        <position position="240"/>
    </location>
</feature>
<comment type="function">
    <text evidence="5 6 8 9 10 11">Transcriptional repressor involved in the regulation of the circadian rhythm by negatively regulating the activity of the clock genes and clock-controlled genes. Acts as the negative limb of a novel autoregulatory feedback loop (DEC loop) which differs from the one formed by the PER and CRY transcriptional repressors (PER/CRY loop). Both these loops are interlocked as it represses the expression of PER1 and in turn is repressed by PER1/2 and CRY1/2. Represses the activity of the circadian transcriptional activator: CLOCK-BMAL1 heterodimer by competing for the binding to E-box elements (5'-CACGTG-3') found within the promoters of its target genes. Negatively regulates its own expression and the expression of DBP and BHLHE41/DEC2. Acts as a corepressor of RXR and the RXR-LXR heterodimers and represses the ligand-induced RXRA/B/G, NR1H3/LXRA, NR1H4 and VDR transactivation activity. Inhibits HNF1A-mediated transactivation of CYP1A2, CYP2E1 and CYP3A11 (PubMed:30555544).</text>
</comment>
<comment type="subunit">
    <text evidence="1 5 7 10 11">Homodimer (PubMed:15560782). Heterodimer with BHLHE40/DEC1 (PubMed:15560782). Interacts with CIART (PubMed:24736997). Interacts with BMAL1 (PubMed:12397359). Interacts with RXRA (By similarity). Interacts with NR0B2 and HNF1A (PubMed:30555544).</text>
</comment>
<comment type="interaction">
    <interactant intactId="EBI-6143801">
        <id>Q99PV5</id>
    </interactant>
    <interactant intactId="EBI-1029979">
        <id>P28033</id>
        <label>Cebpb</label>
    </interactant>
    <organismsDiffer>false</organismsDiffer>
    <experiments>5</experiments>
</comment>
<comment type="interaction">
    <interactant intactId="EBI-6143801">
        <id>Q99PV5</id>
    </interactant>
    <interactant intactId="EBI-16101489">
        <id>Q3TQ03</id>
        <label>Ciart</label>
    </interactant>
    <organismsDiffer>false</organismsDiffer>
    <experiments>2</experiments>
</comment>
<comment type="interaction">
    <interactant intactId="EBI-6143801">
        <id>Q99PV5</id>
    </interactant>
    <interactant intactId="EBI-447269">
        <id>Q16665</id>
        <label>HIF1A</label>
    </interactant>
    <organismsDiffer>true</organismsDiffer>
    <experiments>3</experiments>
</comment>
<comment type="interaction">
    <interactant intactId="EBI-6143801">
        <id>Q99PV5</id>
    </interactant>
    <interactant intactId="EBI-359310">
        <id>P25789</id>
        <label>PSMA4</label>
    </interactant>
    <organismsDiffer>true</organismsDiffer>
    <experiments>2</experiments>
</comment>
<comment type="subcellular location">
    <subcellularLocation>
        <location evidence="2 3">Nucleus</location>
    </subcellularLocation>
</comment>
<comment type="tissue specificity">
    <text>Expressed in skeletal muscle, brain and lung.</text>
</comment>
<comment type="induction">
    <text evidence="9">Expressed in a circdadian manner in the liver with a peak at ZT10.</text>
</comment>
<comment type="miscellaneous">
    <text>Activity profiles and sleep recordings of transgenic mice carrying the mutation Arg-325 show increased vigilance time and less sleep time than control mice in a zeitgeber time- and sleep deprivation-dependent manner.</text>
</comment>